<reference key="1">
    <citation type="submission" date="2009-03" db="EMBL/GenBank/DDBJ databases">
        <title>Complete genome sequence of Edwardsiella ictaluri 93-146.</title>
        <authorList>
            <person name="Williams M.L."/>
            <person name="Gillaspy A.F."/>
            <person name="Dyer D.W."/>
            <person name="Thune R.L."/>
            <person name="Waldbieser G.C."/>
            <person name="Schuster S.C."/>
            <person name="Gipson J."/>
            <person name="Zaitshik J."/>
            <person name="Landry C."/>
            <person name="Lawrence M.L."/>
        </authorList>
    </citation>
    <scope>NUCLEOTIDE SEQUENCE [LARGE SCALE GENOMIC DNA]</scope>
    <source>
        <strain>93-146</strain>
    </source>
</reference>
<name>TILS_EDWI9</name>
<dbReference type="EC" id="6.3.4.19" evidence="1"/>
<dbReference type="EMBL" id="CP001600">
    <property type="protein sequence ID" value="ACR68076.1"/>
    <property type="molecule type" value="Genomic_DNA"/>
</dbReference>
<dbReference type="RefSeq" id="WP_015870267.1">
    <property type="nucleotide sequence ID" value="NZ_CP169062.1"/>
</dbReference>
<dbReference type="SMR" id="C5B7T0"/>
<dbReference type="STRING" id="67780.B6E78_14885"/>
<dbReference type="GeneID" id="69537914"/>
<dbReference type="KEGG" id="eic:NT01EI_0861"/>
<dbReference type="PATRIC" id="fig|634503.3.peg.779"/>
<dbReference type="HOGENOM" id="CLU_018869_2_0_6"/>
<dbReference type="OrthoDB" id="9807403at2"/>
<dbReference type="Proteomes" id="UP000001485">
    <property type="component" value="Chromosome"/>
</dbReference>
<dbReference type="GO" id="GO:0005737">
    <property type="term" value="C:cytoplasm"/>
    <property type="evidence" value="ECO:0007669"/>
    <property type="project" value="UniProtKB-SubCell"/>
</dbReference>
<dbReference type="GO" id="GO:0005524">
    <property type="term" value="F:ATP binding"/>
    <property type="evidence" value="ECO:0007669"/>
    <property type="project" value="UniProtKB-UniRule"/>
</dbReference>
<dbReference type="GO" id="GO:0032267">
    <property type="term" value="F:tRNA(Ile)-lysidine synthase activity"/>
    <property type="evidence" value="ECO:0007669"/>
    <property type="project" value="UniProtKB-EC"/>
</dbReference>
<dbReference type="GO" id="GO:0006400">
    <property type="term" value="P:tRNA modification"/>
    <property type="evidence" value="ECO:0007669"/>
    <property type="project" value="UniProtKB-UniRule"/>
</dbReference>
<dbReference type="CDD" id="cd01992">
    <property type="entry name" value="TilS_N"/>
    <property type="match status" value="1"/>
</dbReference>
<dbReference type="Gene3D" id="1.20.59.20">
    <property type="match status" value="1"/>
</dbReference>
<dbReference type="Gene3D" id="3.40.50.620">
    <property type="entry name" value="HUPs"/>
    <property type="match status" value="1"/>
</dbReference>
<dbReference type="HAMAP" id="MF_01161">
    <property type="entry name" value="tRNA_Ile_lys_synt"/>
    <property type="match status" value="1"/>
</dbReference>
<dbReference type="InterPro" id="IPR012796">
    <property type="entry name" value="Lysidine-tRNA-synth_C"/>
</dbReference>
<dbReference type="InterPro" id="IPR014729">
    <property type="entry name" value="Rossmann-like_a/b/a_fold"/>
</dbReference>
<dbReference type="InterPro" id="IPR011063">
    <property type="entry name" value="TilS/TtcA_N"/>
</dbReference>
<dbReference type="InterPro" id="IPR012094">
    <property type="entry name" value="tRNA_Ile_lys_synt"/>
</dbReference>
<dbReference type="InterPro" id="IPR012795">
    <property type="entry name" value="tRNA_Ile_lys_synt_N"/>
</dbReference>
<dbReference type="InterPro" id="IPR015262">
    <property type="entry name" value="tRNA_Ile_lys_synt_subst-bd"/>
</dbReference>
<dbReference type="NCBIfam" id="TIGR02433">
    <property type="entry name" value="lysidine_TilS_C"/>
    <property type="match status" value="1"/>
</dbReference>
<dbReference type="NCBIfam" id="TIGR02432">
    <property type="entry name" value="lysidine_TilS_N"/>
    <property type="match status" value="1"/>
</dbReference>
<dbReference type="NCBIfam" id="NF007942">
    <property type="entry name" value="PRK10660.1"/>
    <property type="match status" value="1"/>
</dbReference>
<dbReference type="PANTHER" id="PTHR43033">
    <property type="entry name" value="TRNA(ILE)-LYSIDINE SYNTHASE-RELATED"/>
    <property type="match status" value="1"/>
</dbReference>
<dbReference type="PANTHER" id="PTHR43033:SF1">
    <property type="entry name" value="TRNA(ILE)-LYSIDINE SYNTHASE-RELATED"/>
    <property type="match status" value="1"/>
</dbReference>
<dbReference type="Pfam" id="PF01171">
    <property type="entry name" value="ATP_bind_3"/>
    <property type="match status" value="1"/>
</dbReference>
<dbReference type="Pfam" id="PF09179">
    <property type="entry name" value="TilS"/>
    <property type="match status" value="1"/>
</dbReference>
<dbReference type="Pfam" id="PF11734">
    <property type="entry name" value="TilS_C"/>
    <property type="match status" value="1"/>
</dbReference>
<dbReference type="SMART" id="SM00977">
    <property type="entry name" value="TilS_C"/>
    <property type="match status" value="1"/>
</dbReference>
<dbReference type="SUPFAM" id="SSF52402">
    <property type="entry name" value="Adenine nucleotide alpha hydrolases-like"/>
    <property type="match status" value="1"/>
</dbReference>
<dbReference type="SUPFAM" id="SSF82829">
    <property type="entry name" value="MesJ substrate recognition domain-like"/>
    <property type="match status" value="1"/>
</dbReference>
<dbReference type="SUPFAM" id="SSF56037">
    <property type="entry name" value="PheT/TilS domain"/>
    <property type="match status" value="1"/>
</dbReference>
<sequence length="439" mass="50357">MNTLDIQRHIADRLAGRRRLLVAFSGGLDSTVLLHALVQLRASCLPHLRLRVVHVHHGLSHFADQWVDHCESVCYLWQVPLHVLHVQVDTQRNSVEAAARDARYQAIAELIDSRETLLTAQHLDDQCETFLLALKRGSGPTGLSAMAQSMPFFVCEQLRPLLDISREQLTAYAQVHDLSWVEDDSNADARFDRNFLRMRIVPLLRERWPHFSEAVARSASLCAEQEQLLDELLMESLQALMSEDDALSIDGLLPLSEAKRYALLRRWIACFGVMMPTREQLQRLWHEVALAREDAEPQLHLAKCQVRRFRRRLYLLPTLRSLRDEVLRWDPHQPLTLPDGLGELQMGSRGVCVRAPTPGEAVTIRFCAQGVLRIVGRRHSRAIKKIWQELHIPPWERERTPMLYYGESLIAALGVFVTQEGQAVAGATMWNIHWSKDWM</sequence>
<accession>C5B7T0</accession>
<evidence type="ECO:0000255" key="1">
    <source>
        <dbReference type="HAMAP-Rule" id="MF_01161"/>
    </source>
</evidence>
<comment type="function">
    <text evidence="1">Ligates lysine onto the cytidine present at position 34 of the AUA codon-specific tRNA(Ile) that contains the anticodon CAU, in an ATP-dependent manner. Cytidine is converted to lysidine, thus changing the amino acid specificity of the tRNA from methionine to isoleucine.</text>
</comment>
<comment type="catalytic activity">
    <reaction evidence="1">
        <text>cytidine(34) in tRNA(Ile2) + L-lysine + ATP = lysidine(34) in tRNA(Ile2) + AMP + diphosphate + H(+)</text>
        <dbReference type="Rhea" id="RHEA:43744"/>
        <dbReference type="Rhea" id="RHEA-COMP:10625"/>
        <dbReference type="Rhea" id="RHEA-COMP:10670"/>
        <dbReference type="ChEBI" id="CHEBI:15378"/>
        <dbReference type="ChEBI" id="CHEBI:30616"/>
        <dbReference type="ChEBI" id="CHEBI:32551"/>
        <dbReference type="ChEBI" id="CHEBI:33019"/>
        <dbReference type="ChEBI" id="CHEBI:82748"/>
        <dbReference type="ChEBI" id="CHEBI:83665"/>
        <dbReference type="ChEBI" id="CHEBI:456215"/>
        <dbReference type="EC" id="6.3.4.19"/>
    </reaction>
</comment>
<comment type="subcellular location">
    <subcellularLocation>
        <location evidence="1">Cytoplasm</location>
    </subcellularLocation>
</comment>
<comment type="domain">
    <text>The N-terminal region contains the highly conserved SGGXDS motif, predicted to be a P-loop motif involved in ATP binding.</text>
</comment>
<comment type="similarity">
    <text evidence="1">Belongs to the tRNA(Ile)-lysidine synthase family.</text>
</comment>
<feature type="chain" id="PRO_1000213711" description="tRNA(Ile)-lysidine synthase">
    <location>
        <begin position="1"/>
        <end position="439"/>
    </location>
</feature>
<feature type="binding site" evidence="1">
    <location>
        <begin position="25"/>
        <end position="30"/>
    </location>
    <ligand>
        <name>ATP</name>
        <dbReference type="ChEBI" id="CHEBI:30616"/>
    </ligand>
</feature>
<protein>
    <recommendedName>
        <fullName evidence="1">tRNA(Ile)-lysidine synthase</fullName>
        <ecNumber evidence="1">6.3.4.19</ecNumber>
    </recommendedName>
    <alternativeName>
        <fullName evidence="1">tRNA(Ile)-2-lysyl-cytidine synthase</fullName>
    </alternativeName>
    <alternativeName>
        <fullName evidence="1">tRNA(Ile)-lysidine synthetase</fullName>
    </alternativeName>
</protein>
<proteinExistence type="inferred from homology"/>
<gene>
    <name evidence="1" type="primary">tilS</name>
    <name type="ordered locus">NT01EI_0861</name>
</gene>
<organism>
    <name type="scientific">Edwardsiella ictaluri (strain 93-146)</name>
    <dbReference type="NCBI Taxonomy" id="634503"/>
    <lineage>
        <taxon>Bacteria</taxon>
        <taxon>Pseudomonadati</taxon>
        <taxon>Pseudomonadota</taxon>
        <taxon>Gammaproteobacteria</taxon>
        <taxon>Enterobacterales</taxon>
        <taxon>Hafniaceae</taxon>
        <taxon>Edwardsiella</taxon>
    </lineage>
</organism>
<keyword id="KW-0067">ATP-binding</keyword>
<keyword id="KW-0963">Cytoplasm</keyword>
<keyword id="KW-0436">Ligase</keyword>
<keyword id="KW-0547">Nucleotide-binding</keyword>
<keyword id="KW-0819">tRNA processing</keyword>